<comment type="function">
    <text evidence="2 3">Binds GTP and exhibits intrinsic GTPase activity (By similarity). Activates the protein kinase activity of TORC1, and thereby plays a role in the regulation of apoptosis (PubMed:22493059). Stimulates the phosphorylation of S6K through activation of TORC1 signaling (PubMed:22493059). May also have a role in activating TORC2 signaling (PubMed:22493059).</text>
</comment>
<comment type="catalytic activity">
    <reaction evidence="2">
        <text>GTP + H2O = GDP + phosphate + H(+)</text>
        <dbReference type="Rhea" id="RHEA:19669"/>
        <dbReference type="ChEBI" id="CHEBI:15377"/>
        <dbReference type="ChEBI" id="CHEBI:15378"/>
        <dbReference type="ChEBI" id="CHEBI:37565"/>
        <dbReference type="ChEBI" id="CHEBI:43474"/>
        <dbReference type="ChEBI" id="CHEBI:58189"/>
    </reaction>
    <physiologicalReaction direction="left-to-right" evidence="2">
        <dbReference type="Rhea" id="RHEA:19670"/>
    </physiologicalReaction>
</comment>
<comment type="interaction">
    <interactant intactId="EBI-4372932">
        <id>Q9VND8</id>
    </interactant>
    <interactant intactId="EBI-180370">
        <id>Q9VS51</id>
        <label>Cln7</label>
    </interactant>
    <organismsDiffer>false</organismsDiffer>
    <experiments>3</experiments>
</comment>
<comment type="interaction">
    <interactant intactId="EBI-4372932">
        <id>Q9VND8</id>
    </interactant>
    <interactant intactId="EBI-84891">
        <id>Q9VQ93</id>
        <label>sau</label>
    </interactant>
    <organismsDiffer>false</organismsDiffer>
    <experiments>2</experiments>
</comment>
<comment type="interaction">
    <interactant intactId="EBI-4372932">
        <id>Q9VND8</id>
    </interactant>
    <interactant intactId="EBI-100452">
        <id>Q9VGS2</id>
        <label>Tctp</label>
    </interactant>
    <organismsDiffer>false</organismsDiffer>
    <experiments>5</experiments>
</comment>
<comment type="subcellular location">
    <subcellularLocation>
        <location evidence="2">Endomembrane system</location>
        <topology evidence="2">Lipid-anchor</topology>
        <orientation evidence="2">Cytoplasmic side</orientation>
    </subcellularLocation>
    <subcellularLocation>
        <location evidence="2">Golgi apparatus membrane</location>
        <topology evidence="2">Lipid-anchor</topology>
        <orientation evidence="2">Cytoplasmic side</orientation>
    </subcellularLocation>
    <subcellularLocation>
        <location evidence="2">Cytoplasm</location>
        <location evidence="2">Cytosol</location>
    </subcellularLocation>
    <subcellularLocation>
        <location evidence="2">Endoplasmic reticulum membrane</location>
        <topology evidence="2">Lipid-anchor</topology>
        <orientation evidence="2">Cytoplasmic side</orientation>
    </subcellularLocation>
</comment>
<comment type="similarity">
    <text evidence="4">Belongs to the small GTPase superfamily. Rheb family.</text>
</comment>
<accession>Q9VND8</accession>
<accession>Q0KIB7</accession>
<organism>
    <name type="scientific">Drosophila melanogaster</name>
    <name type="common">Fruit fly</name>
    <dbReference type="NCBI Taxonomy" id="7227"/>
    <lineage>
        <taxon>Eukaryota</taxon>
        <taxon>Metazoa</taxon>
        <taxon>Ecdysozoa</taxon>
        <taxon>Arthropoda</taxon>
        <taxon>Hexapoda</taxon>
        <taxon>Insecta</taxon>
        <taxon>Pterygota</taxon>
        <taxon>Neoptera</taxon>
        <taxon>Endopterygota</taxon>
        <taxon>Diptera</taxon>
        <taxon>Brachycera</taxon>
        <taxon>Muscomorpha</taxon>
        <taxon>Ephydroidea</taxon>
        <taxon>Drosophilidae</taxon>
        <taxon>Drosophila</taxon>
        <taxon>Sophophora</taxon>
    </lineage>
</organism>
<proteinExistence type="evidence at protein level"/>
<name>RHEB_DROME</name>
<protein>
    <recommendedName>
        <fullName>GTP-binding protein Rheb homolog</fullName>
        <ecNumber evidence="2">3.6.5.-</ecNumber>
    </recommendedName>
</protein>
<keyword id="KW-0963">Cytoplasm</keyword>
<keyword id="KW-0256">Endoplasmic reticulum</keyword>
<keyword id="KW-0333">Golgi apparatus</keyword>
<keyword id="KW-0342">GTP-binding</keyword>
<keyword id="KW-0378">Hydrolase</keyword>
<keyword id="KW-0449">Lipoprotein</keyword>
<keyword id="KW-0460">Magnesium</keyword>
<keyword id="KW-0472">Membrane</keyword>
<keyword id="KW-0479">Metal-binding</keyword>
<keyword id="KW-0488">Methylation</keyword>
<keyword id="KW-0547">Nucleotide-binding</keyword>
<keyword id="KW-0636">Prenylation</keyword>
<keyword id="KW-1185">Reference proteome</keyword>
<feature type="chain" id="PRO_0000082711" description="GTP-binding protein Rheb homolog">
    <location>
        <begin position="1"/>
        <end position="179"/>
    </location>
</feature>
<feature type="propeptide" id="PRO_0000281368" description="Removed in mature form" evidence="1">
    <location>
        <begin position="180"/>
        <end position="182"/>
    </location>
</feature>
<feature type="short sequence motif" description="Effector region">
    <location>
        <begin position="34"/>
        <end position="42"/>
    </location>
</feature>
<feature type="binding site" evidence="2">
    <location>
        <position position="15"/>
    </location>
    <ligand>
        <name>GTP</name>
        <dbReference type="ChEBI" id="CHEBI:37565"/>
    </ligand>
</feature>
<feature type="binding site" evidence="2">
    <location>
        <position position="17"/>
    </location>
    <ligand>
        <name>GTP</name>
        <dbReference type="ChEBI" id="CHEBI:37565"/>
    </ligand>
</feature>
<feature type="binding site" evidence="2">
    <location>
        <position position="18"/>
    </location>
    <ligand>
        <name>GTP</name>
        <dbReference type="ChEBI" id="CHEBI:37565"/>
    </ligand>
</feature>
<feature type="binding site" evidence="2">
    <location>
        <position position="19"/>
    </location>
    <ligand>
        <name>GTP</name>
        <dbReference type="ChEBI" id="CHEBI:37565"/>
    </ligand>
</feature>
<feature type="binding site" evidence="2">
    <location>
        <position position="19"/>
    </location>
    <ligand>
        <name>Mg(2+)</name>
        <dbReference type="ChEBI" id="CHEBI:18420"/>
    </ligand>
</feature>
<feature type="binding site" evidence="2">
    <location>
        <position position="20"/>
    </location>
    <ligand>
        <name>GTP</name>
        <dbReference type="ChEBI" id="CHEBI:37565"/>
    </ligand>
</feature>
<feature type="binding site" evidence="2">
    <location>
        <position position="31"/>
    </location>
    <ligand>
        <name>GTP</name>
        <dbReference type="ChEBI" id="CHEBI:37565"/>
    </ligand>
</feature>
<feature type="binding site" evidence="2">
    <location>
        <position position="34"/>
    </location>
    <ligand>
        <name>GTP</name>
        <dbReference type="ChEBI" id="CHEBI:37565"/>
    </ligand>
</feature>
<feature type="binding site" evidence="2">
    <location>
        <position position="37"/>
    </location>
    <ligand>
        <name>GTP</name>
        <dbReference type="ChEBI" id="CHEBI:37565"/>
    </ligand>
</feature>
<feature type="binding site" evidence="2">
    <location>
        <position position="37"/>
    </location>
    <ligand>
        <name>Mg(2+)</name>
        <dbReference type="ChEBI" id="CHEBI:18420"/>
    </ligand>
</feature>
<feature type="binding site" evidence="2">
    <location>
        <position position="118"/>
    </location>
    <ligand>
        <name>GTP</name>
        <dbReference type="ChEBI" id="CHEBI:37565"/>
    </ligand>
</feature>
<feature type="binding site" evidence="2">
    <location>
        <position position="121"/>
    </location>
    <ligand>
        <name>GTP</name>
        <dbReference type="ChEBI" id="CHEBI:37565"/>
    </ligand>
</feature>
<feature type="binding site" evidence="2">
    <location>
        <position position="149"/>
    </location>
    <ligand>
        <name>GTP</name>
        <dbReference type="ChEBI" id="CHEBI:37565"/>
    </ligand>
</feature>
<feature type="modified residue" description="Cysteine methyl ester" evidence="1">
    <location>
        <position position="179"/>
    </location>
</feature>
<feature type="lipid moiety-binding region" description="S-farnesyl cysteine" evidence="1">
    <location>
        <position position="179"/>
    </location>
</feature>
<evidence type="ECO:0000250" key="1"/>
<evidence type="ECO:0000250" key="2">
    <source>
        <dbReference type="UniProtKB" id="Q15382"/>
    </source>
</evidence>
<evidence type="ECO:0000269" key="3">
    <source>
    </source>
</evidence>
<evidence type="ECO:0000305" key="4"/>
<dbReference type="EC" id="3.6.5.-" evidence="2"/>
<dbReference type="EMBL" id="AE014297">
    <property type="protein sequence ID" value="AAF52004.3"/>
    <property type="molecule type" value="Genomic_DNA"/>
</dbReference>
<dbReference type="EMBL" id="AY094697">
    <property type="protein sequence ID" value="AAM11050.1"/>
    <property type="molecule type" value="mRNA"/>
</dbReference>
<dbReference type="RefSeq" id="NP_730950.2">
    <property type="nucleotide sequence ID" value="NM_169068.3"/>
</dbReference>
<dbReference type="RefSeq" id="NP_730951.2">
    <property type="nucleotide sequence ID" value="NM_169069.3"/>
</dbReference>
<dbReference type="SMR" id="Q9VND8"/>
<dbReference type="BioGRID" id="72870">
    <property type="interactions" value="112"/>
</dbReference>
<dbReference type="DIP" id="DIP-60269N"/>
<dbReference type="FunCoup" id="Q9VND8">
    <property type="interactions" value="1685"/>
</dbReference>
<dbReference type="IntAct" id="Q9VND8">
    <property type="interactions" value="13"/>
</dbReference>
<dbReference type="MINT" id="Q9VND8"/>
<dbReference type="STRING" id="7227.FBpp0078342"/>
<dbReference type="PaxDb" id="7227-FBpp0078342"/>
<dbReference type="DNASU" id="117332"/>
<dbReference type="EnsemblMetazoa" id="FBtr0078693">
    <property type="protein sequence ID" value="FBpp0078342"/>
    <property type="gene ID" value="FBgn0041191"/>
</dbReference>
<dbReference type="EnsemblMetazoa" id="FBtr0078694">
    <property type="protein sequence ID" value="FBpp0078343"/>
    <property type="gene ID" value="FBgn0041191"/>
</dbReference>
<dbReference type="GeneID" id="117332"/>
<dbReference type="KEGG" id="dme:Dmel_CG1081"/>
<dbReference type="AGR" id="FB:FBgn0041191"/>
<dbReference type="CTD" id="6009"/>
<dbReference type="FlyBase" id="FBgn0041191">
    <property type="gene designation" value="Rheb"/>
</dbReference>
<dbReference type="VEuPathDB" id="VectorBase:FBgn0041191"/>
<dbReference type="eggNOG" id="KOG0395">
    <property type="taxonomic scope" value="Eukaryota"/>
</dbReference>
<dbReference type="GeneTree" id="ENSGT00940000165909"/>
<dbReference type="HOGENOM" id="CLU_041217_9_8_1"/>
<dbReference type="InParanoid" id="Q9VND8"/>
<dbReference type="OMA" id="SARHNEN"/>
<dbReference type="OrthoDB" id="25818at2759"/>
<dbReference type="PhylomeDB" id="Q9VND8"/>
<dbReference type="Reactome" id="R-DME-110523">
    <property type="pathway name" value="TOR signaling pathway"/>
</dbReference>
<dbReference type="Reactome" id="R-DME-1632852">
    <property type="pathway name" value="Macroautophagy"/>
</dbReference>
<dbReference type="Reactome" id="R-DME-165159">
    <property type="pathway name" value="MTOR signalling"/>
</dbReference>
<dbReference type="Reactome" id="R-DME-166208">
    <property type="pathway name" value="mTORC1-mediated signalling"/>
</dbReference>
<dbReference type="Reactome" id="R-DME-380972">
    <property type="pathway name" value="Energy dependent regulation of mTOR by LKB1-AMPK"/>
</dbReference>
<dbReference type="Reactome" id="R-DME-5628897">
    <property type="pathway name" value="TP53 Regulates Metabolic Genes"/>
</dbReference>
<dbReference type="Reactome" id="R-DME-8943724">
    <property type="pathway name" value="Regulation of PTEN gene transcription"/>
</dbReference>
<dbReference type="Reactome" id="R-DME-9639288">
    <property type="pathway name" value="Amino acids regulate mTORC1"/>
</dbReference>
<dbReference type="SignaLink" id="Q9VND8"/>
<dbReference type="BioGRID-ORCS" id="117332">
    <property type="hits" value="1 hit in 3 CRISPR screens"/>
</dbReference>
<dbReference type="GenomeRNAi" id="117332"/>
<dbReference type="PRO" id="PR:Q9VND8"/>
<dbReference type="Proteomes" id="UP000000803">
    <property type="component" value="Chromosome 3R"/>
</dbReference>
<dbReference type="Bgee" id="FBgn0041191">
    <property type="expression patterns" value="Expressed in oviduct (Drosophila) and 226 other cell types or tissues"/>
</dbReference>
<dbReference type="ExpressionAtlas" id="Q9VND8">
    <property type="expression patterns" value="baseline and differential"/>
</dbReference>
<dbReference type="GO" id="GO:0005829">
    <property type="term" value="C:cytosol"/>
    <property type="evidence" value="ECO:0007669"/>
    <property type="project" value="UniProtKB-SubCell"/>
</dbReference>
<dbReference type="GO" id="GO:0005789">
    <property type="term" value="C:endoplasmic reticulum membrane"/>
    <property type="evidence" value="ECO:0007669"/>
    <property type="project" value="UniProtKB-SubCell"/>
</dbReference>
<dbReference type="GO" id="GO:0000139">
    <property type="term" value="C:Golgi membrane"/>
    <property type="evidence" value="ECO:0007669"/>
    <property type="project" value="UniProtKB-SubCell"/>
</dbReference>
<dbReference type="GO" id="GO:0005886">
    <property type="term" value="C:plasma membrane"/>
    <property type="evidence" value="ECO:0000318"/>
    <property type="project" value="GO_Central"/>
</dbReference>
<dbReference type="GO" id="GO:0019003">
    <property type="term" value="F:GDP binding"/>
    <property type="evidence" value="ECO:0000318"/>
    <property type="project" value="GO_Central"/>
</dbReference>
<dbReference type="GO" id="GO:0005525">
    <property type="term" value="F:GTP binding"/>
    <property type="evidence" value="ECO:0000318"/>
    <property type="project" value="GO_Central"/>
</dbReference>
<dbReference type="GO" id="GO:0003924">
    <property type="term" value="F:GTPase activity"/>
    <property type="evidence" value="ECO:0000314"/>
    <property type="project" value="FlyBase"/>
</dbReference>
<dbReference type="GO" id="GO:0046872">
    <property type="term" value="F:metal ion binding"/>
    <property type="evidence" value="ECO:0007669"/>
    <property type="project" value="UniProtKB-KW"/>
</dbReference>
<dbReference type="GO" id="GO:0045176">
    <property type="term" value="P:apical protein localization"/>
    <property type="evidence" value="ECO:0000315"/>
    <property type="project" value="FlyBase"/>
</dbReference>
<dbReference type="GO" id="GO:0033500">
    <property type="term" value="P:carbohydrate homeostasis"/>
    <property type="evidence" value="ECO:0000315"/>
    <property type="project" value="FlyBase"/>
</dbReference>
<dbReference type="GO" id="GO:0042632">
    <property type="term" value="P:cholesterol homeostasis"/>
    <property type="evidence" value="ECO:0000315"/>
    <property type="project" value="FlyBase"/>
</dbReference>
<dbReference type="GO" id="GO:0000082">
    <property type="term" value="P:G1/S transition of mitotic cell cycle"/>
    <property type="evidence" value="ECO:0000315"/>
    <property type="project" value="FlyBase"/>
</dbReference>
<dbReference type="GO" id="GO:0008286">
    <property type="term" value="P:insulin receptor signaling pathway"/>
    <property type="evidence" value="ECO:0000315"/>
    <property type="project" value="FlyBase"/>
</dbReference>
<dbReference type="GO" id="GO:0055088">
    <property type="term" value="P:lipid homeostasis"/>
    <property type="evidence" value="ECO:0000315"/>
    <property type="project" value="FlyBase"/>
</dbReference>
<dbReference type="GO" id="GO:0035264">
    <property type="term" value="P:multicellular organism growth"/>
    <property type="evidence" value="ECO:0000315"/>
    <property type="project" value="FlyBase"/>
</dbReference>
<dbReference type="GO" id="GO:0010507">
    <property type="term" value="P:negative regulation of autophagy"/>
    <property type="evidence" value="ECO:0000315"/>
    <property type="project" value="FlyBase"/>
</dbReference>
<dbReference type="GO" id="GO:1904503">
    <property type="term" value="P:negative regulation of lipophagy"/>
    <property type="evidence" value="ECO:0000315"/>
    <property type="project" value="FlyBase"/>
</dbReference>
<dbReference type="GO" id="GO:0016242">
    <property type="term" value="P:negative regulation of macroautophagy"/>
    <property type="evidence" value="ECO:0000315"/>
    <property type="project" value="FlyBase"/>
</dbReference>
<dbReference type="GO" id="GO:1903940">
    <property type="term" value="P:negative regulation of TORC2 signaling"/>
    <property type="evidence" value="ECO:0000314"/>
    <property type="project" value="UniProtKB"/>
</dbReference>
<dbReference type="GO" id="GO:1902669">
    <property type="term" value="P:positive regulation of axon guidance"/>
    <property type="evidence" value="ECO:0000315"/>
    <property type="project" value="FlyBase"/>
</dbReference>
<dbReference type="GO" id="GO:0030307">
    <property type="term" value="P:positive regulation of cell growth"/>
    <property type="evidence" value="ECO:0000315"/>
    <property type="project" value="FlyBase"/>
</dbReference>
<dbReference type="GO" id="GO:0045793">
    <property type="term" value="P:positive regulation of cell size"/>
    <property type="evidence" value="ECO:0000315"/>
    <property type="project" value="FlyBase"/>
</dbReference>
<dbReference type="GO" id="GO:0016239">
    <property type="term" value="P:positive regulation of macroautophagy"/>
    <property type="evidence" value="ECO:0000315"/>
    <property type="project" value="FlyBase"/>
</dbReference>
<dbReference type="GO" id="GO:0002052">
    <property type="term" value="P:positive regulation of neuroblast proliferation"/>
    <property type="evidence" value="ECO:0000315"/>
    <property type="project" value="FlyBase"/>
</dbReference>
<dbReference type="GO" id="GO:0090070">
    <property type="term" value="P:positive regulation of ribosome biogenesis"/>
    <property type="evidence" value="ECO:0000315"/>
    <property type="project" value="FlyBase"/>
</dbReference>
<dbReference type="GO" id="GO:0045887">
    <property type="term" value="P:positive regulation of synaptic assembly at neuromuscular junction"/>
    <property type="evidence" value="ECO:0000315"/>
    <property type="project" value="FlyBase"/>
</dbReference>
<dbReference type="GO" id="GO:1904263">
    <property type="term" value="P:positive regulation of TORC1 signaling"/>
    <property type="evidence" value="ECO:0000314"/>
    <property type="project" value="UniProtKB"/>
</dbReference>
<dbReference type="GO" id="GO:0045727">
    <property type="term" value="P:positive regulation of translation"/>
    <property type="evidence" value="ECO:0000315"/>
    <property type="project" value="FlyBase"/>
</dbReference>
<dbReference type="GO" id="GO:0042594">
    <property type="term" value="P:response to starvation"/>
    <property type="evidence" value="ECO:0000270"/>
    <property type="project" value="FlyBase"/>
</dbReference>
<dbReference type="GO" id="GO:0007264">
    <property type="term" value="P:small GTPase-mediated signal transduction"/>
    <property type="evidence" value="ECO:0000318"/>
    <property type="project" value="GO_Central"/>
</dbReference>
<dbReference type="GO" id="GO:0007430">
    <property type="term" value="P:terminal branching, open tracheal system"/>
    <property type="evidence" value="ECO:0000315"/>
    <property type="project" value="FlyBase"/>
</dbReference>
<dbReference type="GO" id="GO:0048010">
    <property type="term" value="P:vascular endothelial growth factor receptor signaling pathway"/>
    <property type="evidence" value="ECO:0000316"/>
    <property type="project" value="FlyBase"/>
</dbReference>
<dbReference type="CDD" id="cd04137">
    <property type="entry name" value="RheB"/>
    <property type="match status" value="1"/>
</dbReference>
<dbReference type="FunFam" id="3.40.50.300:FF:000273">
    <property type="entry name" value="GTP-binding protein Rheb homolog"/>
    <property type="match status" value="1"/>
</dbReference>
<dbReference type="Gene3D" id="3.40.50.300">
    <property type="entry name" value="P-loop containing nucleotide triphosphate hydrolases"/>
    <property type="match status" value="1"/>
</dbReference>
<dbReference type="InterPro" id="IPR027417">
    <property type="entry name" value="P-loop_NTPase"/>
</dbReference>
<dbReference type="InterPro" id="IPR005225">
    <property type="entry name" value="Small_GTP-bd"/>
</dbReference>
<dbReference type="InterPro" id="IPR001806">
    <property type="entry name" value="Small_GTPase"/>
</dbReference>
<dbReference type="InterPro" id="IPR020849">
    <property type="entry name" value="Small_GTPase_Ras-type"/>
</dbReference>
<dbReference type="NCBIfam" id="TIGR00231">
    <property type="entry name" value="small_GTP"/>
    <property type="match status" value="1"/>
</dbReference>
<dbReference type="PANTHER" id="PTHR24070">
    <property type="entry name" value="RAS, DI-RAS, AND RHEB FAMILY MEMBERS OF SMALL GTPASE SUPERFAMILY"/>
    <property type="match status" value="1"/>
</dbReference>
<dbReference type="Pfam" id="PF00071">
    <property type="entry name" value="Ras"/>
    <property type="match status" value="1"/>
</dbReference>
<dbReference type="PRINTS" id="PR00449">
    <property type="entry name" value="RASTRNSFRMNG"/>
</dbReference>
<dbReference type="SMART" id="SM00175">
    <property type="entry name" value="RAB"/>
    <property type="match status" value="1"/>
</dbReference>
<dbReference type="SMART" id="SM00173">
    <property type="entry name" value="RAS"/>
    <property type="match status" value="1"/>
</dbReference>
<dbReference type="SMART" id="SM00174">
    <property type="entry name" value="RHO"/>
    <property type="match status" value="1"/>
</dbReference>
<dbReference type="SUPFAM" id="SSF52540">
    <property type="entry name" value="P-loop containing nucleoside triphosphate hydrolases"/>
    <property type="match status" value="1"/>
</dbReference>
<dbReference type="PROSITE" id="PS51421">
    <property type="entry name" value="RAS"/>
    <property type="match status" value="1"/>
</dbReference>
<sequence length="182" mass="20731">MPTKERHIAMMGYRSVGKSSLCIQFVEGQFVDSYDPTIENTFTKIERVKSQDYIVKLIDTAGQDEYSIFPVQYSMDYHGYVLVYSITSQKSFEVVKIIYEKLLDVMGKKYVPVVLVGNKIDLHQERTVSTEEGKKLAESWRAAFLETSAKQNESVGDIFHQLLILIENENGNPQEKSGCLVS</sequence>
<reference key="1">
    <citation type="journal article" date="2000" name="Science">
        <title>The genome sequence of Drosophila melanogaster.</title>
        <authorList>
            <person name="Adams M.D."/>
            <person name="Celniker S.E."/>
            <person name="Holt R.A."/>
            <person name="Evans C.A."/>
            <person name="Gocayne J.D."/>
            <person name="Amanatides P.G."/>
            <person name="Scherer S.E."/>
            <person name="Li P.W."/>
            <person name="Hoskins R.A."/>
            <person name="Galle R.F."/>
            <person name="George R.A."/>
            <person name="Lewis S.E."/>
            <person name="Richards S."/>
            <person name="Ashburner M."/>
            <person name="Henderson S.N."/>
            <person name="Sutton G.G."/>
            <person name="Wortman J.R."/>
            <person name="Yandell M.D."/>
            <person name="Zhang Q."/>
            <person name="Chen L.X."/>
            <person name="Brandon R.C."/>
            <person name="Rogers Y.-H.C."/>
            <person name="Blazej R.G."/>
            <person name="Champe M."/>
            <person name="Pfeiffer B.D."/>
            <person name="Wan K.H."/>
            <person name="Doyle C."/>
            <person name="Baxter E.G."/>
            <person name="Helt G."/>
            <person name="Nelson C.R."/>
            <person name="Miklos G.L.G."/>
            <person name="Abril J.F."/>
            <person name="Agbayani A."/>
            <person name="An H.-J."/>
            <person name="Andrews-Pfannkoch C."/>
            <person name="Baldwin D."/>
            <person name="Ballew R.M."/>
            <person name="Basu A."/>
            <person name="Baxendale J."/>
            <person name="Bayraktaroglu L."/>
            <person name="Beasley E.M."/>
            <person name="Beeson K.Y."/>
            <person name="Benos P.V."/>
            <person name="Berman B.P."/>
            <person name="Bhandari D."/>
            <person name="Bolshakov S."/>
            <person name="Borkova D."/>
            <person name="Botchan M.R."/>
            <person name="Bouck J."/>
            <person name="Brokstein P."/>
            <person name="Brottier P."/>
            <person name="Burtis K.C."/>
            <person name="Busam D.A."/>
            <person name="Butler H."/>
            <person name="Cadieu E."/>
            <person name="Center A."/>
            <person name="Chandra I."/>
            <person name="Cherry J.M."/>
            <person name="Cawley S."/>
            <person name="Dahlke C."/>
            <person name="Davenport L.B."/>
            <person name="Davies P."/>
            <person name="de Pablos B."/>
            <person name="Delcher A."/>
            <person name="Deng Z."/>
            <person name="Mays A.D."/>
            <person name="Dew I."/>
            <person name="Dietz S.M."/>
            <person name="Dodson K."/>
            <person name="Doup L.E."/>
            <person name="Downes M."/>
            <person name="Dugan-Rocha S."/>
            <person name="Dunkov B.C."/>
            <person name="Dunn P."/>
            <person name="Durbin K.J."/>
            <person name="Evangelista C.C."/>
            <person name="Ferraz C."/>
            <person name="Ferriera S."/>
            <person name="Fleischmann W."/>
            <person name="Fosler C."/>
            <person name="Gabrielian A.E."/>
            <person name="Garg N.S."/>
            <person name="Gelbart W.M."/>
            <person name="Glasser K."/>
            <person name="Glodek A."/>
            <person name="Gong F."/>
            <person name="Gorrell J.H."/>
            <person name="Gu Z."/>
            <person name="Guan P."/>
            <person name="Harris M."/>
            <person name="Harris N.L."/>
            <person name="Harvey D.A."/>
            <person name="Heiman T.J."/>
            <person name="Hernandez J.R."/>
            <person name="Houck J."/>
            <person name="Hostin D."/>
            <person name="Houston K.A."/>
            <person name="Howland T.J."/>
            <person name="Wei M.-H."/>
            <person name="Ibegwam C."/>
            <person name="Jalali M."/>
            <person name="Kalush F."/>
            <person name="Karpen G.H."/>
            <person name="Ke Z."/>
            <person name="Kennison J.A."/>
            <person name="Ketchum K.A."/>
            <person name="Kimmel B.E."/>
            <person name="Kodira C.D."/>
            <person name="Kraft C.L."/>
            <person name="Kravitz S."/>
            <person name="Kulp D."/>
            <person name="Lai Z."/>
            <person name="Lasko P."/>
            <person name="Lei Y."/>
            <person name="Levitsky A.A."/>
            <person name="Li J.H."/>
            <person name="Li Z."/>
            <person name="Liang Y."/>
            <person name="Lin X."/>
            <person name="Liu X."/>
            <person name="Mattei B."/>
            <person name="McIntosh T.C."/>
            <person name="McLeod M.P."/>
            <person name="McPherson D."/>
            <person name="Merkulov G."/>
            <person name="Milshina N.V."/>
            <person name="Mobarry C."/>
            <person name="Morris J."/>
            <person name="Moshrefi A."/>
            <person name="Mount S.M."/>
            <person name="Moy M."/>
            <person name="Murphy B."/>
            <person name="Murphy L."/>
            <person name="Muzny D.M."/>
            <person name="Nelson D.L."/>
            <person name="Nelson D.R."/>
            <person name="Nelson K.A."/>
            <person name="Nixon K."/>
            <person name="Nusskern D.R."/>
            <person name="Pacleb J.M."/>
            <person name="Palazzolo M."/>
            <person name="Pittman G.S."/>
            <person name="Pan S."/>
            <person name="Pollard J."/>
            <person name="Puri V."/>
            <person name="Reese M.G."/>
            <person name="Reinert K."/>
            <person name="Remington K."/>
            <person name="Saunders R.D.C."/>
            <person name="Scheeler F."/>
            <person name="Shen H."/>
            <person name="Shue B.C."/>
            <person name="Siden-Kiamos I."/>
            <person name="Simpson M."/>
            <person name="Skupski M.P."/>
            <person name="Smith T.J."/>
            <person name="Spier E."/>
            <person name="Spradling A.C."/>
            <person name="Stapleton M."/>
            <person name="Strong R."/>
            <person name="Sun E."/>
            <person name="Svirskas R."/>
            <person name="Tector C."/>
            <person name="Turner R."/>
            <person name="Venter E."/>
            <person name="Wang A.H."/>
            <person name="Wang X."/>
            <person name="Wang Z.-Y."/>
            <person name="Wassarman D.A."/>
            <person name="Weinstock G.M."/>
            <person name="Weissenbach J."/>
            <person name="Williams S.M."/>
            <person name="Woodage T."/>
            <person name="Worley K.C."/>
            <person name="Wu D."/>
            <person name="Yang S."/>
            <person name="Yao Q.A."/>
            <person name="Ye J."/>
            <person name="Yeh R.-F."/>
            <person name="Zaveri J.S."/>
            <person name="Zhan M."/>
            <person name="Zhang G."/>
            <person name="Zhao Q."/>
            <person name="Zheng L."/>
            <person name="Zheng X.H."/>
            <person name="Zhong F.N."/>
            <person name="Zhong W."/>
            <person name="Zhou X."/>
            <person name="Zhu S.C."/>
            <person name="Zhu X."/>
            <person name="Smith H.O."/>
            <person name="Gibbs R.A."/>
            <person name="Myers E.W."/>
            <person name="Rubin G.M."/>
            <person name="Venter J.C."/>
        </authorList>
    </citation>
    <scope>NUCLEOTIDE SEQUENCE [LARGE SCALE GENOMIC DNA]</scope>
    <source>
        <strain>Berkeley</strain>
    </source>
</reference>
<reference key="2">
    <citation type="journal article" date="2002" name="Genome Biol.">
        <title>Annotation of the Drosophila melanogaster euchromatic genome: a systematic review.</title>
        <authorList>
            <person name="Misra S."/>
            <person name="Crosby M.A."/>
            <person name="Mungall C.J."/>
            <person name="Matthews B.B."/>
            <person name="Campbell K.S."/>
            <person name="Hradecky P."/>
            <person name="Huang Y."/>
            <person name="Kaminker J.S."/>
            <person name="Millburn G.H."/>
            <person name="Prochnik S.E."/>
            <person name="Smith C.D."/>
            <person name="Tupy J.L."/>
            <person name="Whitfield E.J."/>
            <person name="Bayraktaroglu L."/>
            <person name="Berman B.P."/>
            <person name="Bettencourt B.R."/>
            <person name="Celniker S.E."/>
            <person name="de Grey A.D.N.J."/>
            <person name="Drysdale R.A."/>
            <person name="Harris N.L."/>
            <person name="Richter J."/>
            <person name="Russo S."/>
            <person name="Schroeder A.J."/>
            <person name="Shu S.Q."/>
            <person name="Stapleton M."/>
            <person name="Yamada C."/>
            <person name="Ashburner M."/>
            <person name="Gelbart W.M."/>
            <person name="Rubin G.M."/>
            <person name="Lewis S.E."/>
        </authorList>
    </citation>
    <scope>GENOME REANNOTATION</scope>
    <source>
        <strain>Berkeley</strain>
    </source>
</reference>
<reference key="3">
    <citation type="journal article" date="2002" name="Genome Biol.">
        <title>A Drosophila full-length cDNA resource.</title>
        <authorList>
            <person name="Stapleton M."/>
            <person name="Carlson J.W."/>
            <person name="Brokstein P."/>
            <person name="Yu C."/>
            <person name="Champe M."/>
            <person name="George R.A."/>
            <person name="Guarin H."/>
            <person name="Kronmiller B."/>
            <person name="Pacleb J.M."/>
            <person name="Park S."/>
            <person name="Wan K.H."/>
            <person name="Rubin G.M."/>
            <person name="Celniker S.E."/>
        </authorList>
    </citation>
    <scope>NUCLEOTIDE SEQUENCE [LARGE SCALE MRNA]</scope>
    <source>
        <strain>Berkeley</strain>
        <tissue>Head</tissue>
    </source>
</reference>
<reference key="4">
    <citation type="journal article" date="2012" name="Mol. Cell. Biol.">
        <title>LST8 regulates cell growth via target-of-rapamycin complex 2 (TORC2).</title>
        <authorList>
            <person name="Wang T."/>
            <person name="Blumhagen R."/>
            <person name="Lao U."/>
            <person name="Kuo Y."/>
            <person name="Edgar B.A."/>
        </authorList>
    </citation>
    <scope>FUNCTION</scope>
</reference>
<gene>
    <name type="primary">Rheb</name>
    <name type="ORF">CG1081</name>
</gene>